<dbReference type="EC" id="1.2.1.70" evidence="1"/>
<dbReference type="EMBL" id="CP000867">
    <property type="protein sequence ID" value="ABX01676.1"/>
    <property type="molecule type" value="Genomic_DNA"/>
</dbReference>
<dbReference type="SMR" id="A9A8K3"/>
<dbReference type="STRING" id="444158.MmarC6_0859"/>
<dbReference type="KEGG" id="mmx:MmarC6_0859"/>
<dbReference type="eggNOG" id="arCOG01036">
    <property type="taxonomic scope" value="Archaea"/>
</dbReference>
<dbReference type="HOGENOM" id="CLU_035113_0_0_2"/>
<dbReference type="OrthoDB" id="4562at2157"/>
<dbReference type="PhylomeDB" id="A9A8K3"/>
<dbReference type="UniPathway" id="UPA00251">
    <property type="reaction ID" value="UER00316"/>
</dbReference>
<dbReference type="GO" id="GO:0008883">
    <property type="term" value="F:glutamyl-tRNA reductase activity"/>
    <property type="evidence" value="ECO:0007669"/>
    <property type="project" value="UniProtKB-UniRule"/>
</dbReference>
<dbReference type="GO" id="GO:0050661">
    <property type="term" value="F:NADP binding"/>
    <property type="evidence" value="ECO:0007669"/>
    <property type="project" value="InterPro"/>
</dbReference>
<dbReference type="GO" id="GO:0019353">
    <property type="term" value="P:protoporphyrinogen IX biosynthetic process from glutamate"/>
    <property type="evidence" value="ECO:0007669"/>
    <property type="project" value="TreeGrafter"/>
</dbReference>
<dbReference type="CDD" id="cd05213">
    <property type="entry name" value="NAD_bind_Glutamyl_tRNA_reduct"/>
    <property type="match status" value="1"/>
</dbReference>
<dbReference type="FunFam" id="3.40.50.720:FF:000031">
    <property type="entry name" value="Glutamyl-tRNA reductase"/>
    <property type="match status" value="1"/>
</dbReference>
<dbReference type="Gene3D" id="1.10.1200.70">
    <property type="entry name" value="Glutamyl tRNA-reductase dimerization domain"/>
    <property type="match status" value="1"/>
</dbReference>
<dbReference type="Gene3D" id="3.30.460.30">
    <property type="entry name" value="Glutamyl-tRNA reductase, N-terminal domain"/>
    <property type="match status" value="1"/>
</dbReference>
<dbReference type="Gene3D" id="3.40.50.720">
    <property type="entry name" value="NAD(P)-binding Rossmann-like Domain"/>
    <property type="match status" value="1"/>
</dbReference>
<dbReference type="HAMAP" id="MF_00087">
    <property type="entry name" value="Glu_tRNA_reductase"/>
    <property type="match status" value="1"/>
</dbReference>
<dbReference type="InterPro" id="IPR000343">
    <property type="entry name" value="4pyrrol_synth_GluRdtase"/>
</dbReference>
<dbReference type="InterPro" id="IPR015896">
    <property type="entry name" value="4pyrrol_synth_GluRdtase_dimer"/>
</dbReference>
<dbReference type="InterPro" id="IPR015895">
    <property type="entry name" value="4pyrrol_synth_GluRdtase_N"/>
</dbReference>
<dbReference type="InterPro" id="IPR018214">
    <property type="entry name" value="GluRdtase_CS"/>
</dbReference>
<dbReference type="InterPro" id="IPR036453">
    <property type="entry name" value="GluRdtase_dimer_dom_sf"/>
</dbReference>
<dbReference type="InterPro" id="IPR036343">
    <property type="entry name" value="GluRdtase_N_sf"/>
</dbReference>
<dbReference type="InterPro" id="IPR036291">
    <property type="entry name" value="NAD(P)-bd_dom_sf"/>
</dbReference>
<dbReference type="InterPro" id="IPR006151">
    <property type="entry name" value="Shikm_DH/Glu-tRNA_Rdtase"/>
</dbReference>
<dbReference type="NCBIfam" id="TIGR01035">
    <property type="entry name" value="hemA"/>
    <property type="match status" value="1"/>
</dbReference>
<dbReference type="PANTHER" id="PTHR43013">
    <property type="entry name" value="GLUTAMYL-TRNA REDUCTASE"/>
    <property type="match status" value="1"/>
</dbReference>
<dbReference type="PANTHER" id="PTHR43013:SF1">
    <property type="entry name" value="GLUTAMYL-TRNA REDUCTASE"/>
    <property type="match status" value="1"/>
</dbReference>
<dbReference type="Pfam" id="PF00745">
    <property type="entry name" value="GlutR_dimer"/>
    <property type="match status" value="1"/>
</dbReference>
<dbReference type="Pfam" id="PF05201">
    <property type="entry name" value="GlutR_N"/>
    <property type="match status" value="1"/>
</dbReference>
<dbReference type="Pfam" id="PF01488">
    <property type="entry name" value="Shikimate_DH"/>
    <property type="match status" value="1"/>
</dbReference>
<dbReference type="PIRSF" id="PIRSF000445">
    <property type="entry name" value="4pyrrol_synth_GluRdtase"/>
    <property type="match status" value="1"/>
</dbReference>
<dbReference type="SUPFAM" id="SSF69742">
    <property type="entry name" value="Glutamyl tRNA-reductase catalytic, N-terminal domain"/>
    <property type="match status" value="1"/>
</dbReference>
<dbReference type="SUPFAM" id="SSF69075">
    <property type="entry name" value="Glutamyl tRNA-reductase dimerization domain"/>
    <property type="match status" value="1"/>
</dbReference>
<dbReference type="SUPFAM" id="SSF51735">
    <property type="entry name" value="NAD(P)-binding Rossmann-fold domains"/>
    <property type="match status" value="1"/>
</dbReference>
<dbReference type="PROSITE" id="PS00747">
    <property type="entry name" value="GLUTR"/>
    <property type="match status" value="1"/>
</dbReference>
<reference key="1">
    <citation type="submission" date="2007-10" db="EMBL/GenBank/DDBJ databases">
        <title>Complete sequence of Methanococcus maripaludis C6.</title>
        <authorList>
            <consortium name="US DOE Joint Genome Institute"/>
            <person name="Copeland A."/>
            <person name="Lucas S."/>
            <person name="Lapidus A."/>
            <person name="Barry K."/>
            <person name="Glavina del Rio T."/>
            <person name="Dalin E."/>
            <person name="Tice H."/>
            <person name="Pitluck S."/>
            <person name="Clum A."/>
            <person name="Schmutz J."/>
            <person name="Larimer F."/>
            <person name="Land M."/>
            <person name="Hauser L."/>
            <person name="Kyrpides N."/>
            <person name="Mikhailova N."/>
            <person name="Sieprawska-Lupa M."/>
            <person name="Whitman W.B."/>
            <person name="Richardson P."/>
        </authorList>
    </citation>
    <scope>NUCLEOTIDE SEQUENCE [LARGE SCALE GENOMIC DNA]</scope>
    <source>
        <strain>C6 / ATCC BAA-1332</strain>
    </source>
</reference>
<proteinExistence type="inferred from homology"/>
<keyword id="KW-0521">NADP</keyword>
<keyword id="KW-0560">Oxidoreductase</keyword>
<keyword id="KW-0627">Porphyrin biosynthesis</keyword>
<sequence length="382" mass="43638">MLVVKADYKKYPIPVLEKMRIDEDEFYKKYEACVVVQTCNRIEAYFDTEVNSDIDCILNDFSGFDVLKGKTATFHFLRVSCGMESMILGENQILGQIKTSFQKARELKKTSRYLDGLFLKAIHVGQRARTETKINEGGVSIGSAAVELAEKNFGLTNRNVLLIGAGEMGTLVAKALLEKHIKAVIVSNRTYERAETLAEELKGIAVHFDKLKEAINFSDVIICATSSPHYILKKEDLNDVGNKIIIDIANPRDVDDAVREFENIKLYTIDDLRNISDKNIQKRVEEVPAVEKIINEEYEVLMKQIEKINIEEVLKDFNSYVEEIRVKELEKAIKLSKTKNPEEIMENFSKAFVKRITHDFVSYSINTSKEDLMNSAWWKNGK</sequence>
<name>HEM1_METM6</name>
<gene>
    <name evidence="1" type="primary">hemA</name>
    <name type="ordered locus">MmarC6_0859</name>
</gene>
<comment type="function">
    <text evidence="1">Catalyzes the NADPH-dependent reduction of glutamyl-tRNA(Glu) to glutamate 1-semialdehyde (GSA).</text>
</comment>
<comment type="catalytic activity">
    <reaction evidence="1">
        <text>(S)-4-amino-5-oxopentanoate + tRNA(Glu) + NADP(+) = L-glutamyl-tRNA(Glu) + NADPH + H(+)</text>
        <dbReference type="Rhea" id="RHEA:12344"/>
        <dbReference type="Rhea" id="RHEA-COMP:9663"/>
        <dbReference type="Rhea" id="RHEA-COMP:9680"/>
        <dbReference type="ChEBI" id="CHEBI:15378"/>
        <dbReference type="ChEBI" id="CHEBI:57501"/>
        <dbReference type="ChEBI" id="CHEBI:57783"/>
        <dbReference type="ChEBI" id="CHEBI:58349"/>
        <dbReference type="ChEBI" id="CHEBI:78442"/>
        <dbReference type="ChEBI" id="CHEBI:78520"/>
        <dbReference type="EC" id="1.2.1.70"/>
    </reaction>
</comment>
<comment type="pathway">
    <text evidence="1">Porphyrin-containing compound metabolism; protoporphyrin-IX biosynthesis; 5-aminolevulinate from L-glutamyl-tRNA(Glu): step 1/2.</text>
</comment>
<comment type="subunit">
    <text evidence="1">Homodimer.</text>
</comment>
<comment type="domain">
    <text evidence="1">Possesses an unusual extended V-shaped dimeric structure with each monomer consisting of three distinct domains arranged along a curved 'spinal' alpha-helix. The N-terminal catalytic domain specifically recognizes the glutamate moiety of the substrate. The second domain is the NADPH-binding domain, and the third C-terminal domain is responsible for dimerization.</text>
</comment>
<comment type="miscellaneous">
    <text evidence="1">During catalysis, the active site Cys acts as a nucleophile attacking the alpha-carbonyl group of tRNA-bound glutamate with the formation of a thioester intermediate between enzyme and glutamate, and the concomitant release of tRNA(Glu). The thioester intermediate is finally reduced by direct hydride transfer from NADPH, to form the product GSA.</text>
</comment>
<comment type="similarity">
    <text evidence="1">Belongs to the glutamyl-tRNA reductase family.</text>
</comment>
<organism>
    <name type="scientific">Methanococcus maripaludis (strain C6 / ATCC BAA-1332)</name>
    <dbReference type="NCBI Taxonomy" id="444158"/>
    <lineage>
        <taxon>Archaea</taxon>
        <taxon>Methanobacteriati</taxon>
        <taxon>Methanobacteriota</taxon>
        <taxon>Methanomada group</taxon>
        <taxon>Methanococci</taxon>
        <taxon>Methanococcales</taxon>
        <taxon>Methanococcaceae</taxon>
        <taxon>Methanococcus</taxon>
    </lineage>
</organism>
<evidence type="ECO:0000255" key="1">
    <source>
        <dbReference type="HAMAP-Rule" id="MF_00087"/>
    </source>
</evidence>
<feature type="chain" id="PRO_1000093150" description="Glutamyl-tRNA reductase">
    <location>
        <begin position="1"/>
        <end position="382"/>
    </location>
</feature>
<feature type="active site" description="Nucleophile" evidence="1">
    <location>
        <position position="39"/>
    </location>
</feature>
<feature type="binding site" evidence="1">
    <location>
        <begin position="38"/>
        <end position="41"/>
    </location>
    <ligand>
        <name>substrate</name>
    </ligand>
</feature>
<feature type="binding site" evidence="1">
    <location>
        <position position="85"/>
    </location>
    <ligand>
        <name>substrate</name>
    </ligand>
</feature>
<feature type="binding site" evidence="1">
    <location>
        <begin position="90"/>
        <end position="92"/>
    </location>
    <ligand>
        <name>substrate</name>
    </ligand>
</feature>
<feature type="binding site" evidence="1">
    <location>
        <position position="96"/>
    </location>
    <ligand>
        <name>substrate</name>
    </ligand>
</feature>
<feature type="binding site" evidence="1">
    <location>
        <begin position="164"/>
        <end position="169"/>
    </location>
    <ligand>
        <name>NADP(+)</name>
        <dbReference type="ChEBI" id="CHEBI:58349"/>
    </ligand>
</feature>
<feature type="site" description="Important for activity" evidence="1">
    <location>
        <position position="75"/>
    </location>
</feature>
<accession>A9A8K3</accession>
<protein>
    <recommendedName>
        <fullName evidence="1">Glutamyl-tRNA reductase</fullName>
        <shortName evidence="1">GluTR</shortName>
        <ecNumber evidence="1">1.2.1.70</ecNumber>
    </recommendedName>
</protein>